<keyword id="KW-0106">Calcium</keyword>
<keyword id="KW-0148">Chlorophyll</keyword>
<keyword id="KW-0150">Chloroplast</keyword>
<keyword id="KW-0157">Chromophore</keyword>
<keyword id="KW-0249">Electron transport</keyword>
<keyword id="KW-0359">Herbicide resistance</keyword>
<keyword id="KW-0408">Iron</keyword>
<keyword id="KW-0460">Magnesium</keyword>
<keyword id="KW-0464">Manganese</keyword>
<keyword id="KW-0472">Membrane</keyword>
<keyword id="KW-0479">Metal-binding</keyword>
<keyword id="KW-0560">Oxidoreductase</keyword>
<keyword id="KW-0602">Photosynthesis</keyword>
<keyword id="KW-0604">Photosystem II</keyword>
<keyword id="KW-0934">Plastid</keyword>
<keyword id="KW-0793">Thylakoid</keyword>
<keyword id="KW-0812">Transmembrane</keyword>
<keyword id="KW-1133">Transmembrane helix</keyword>
<keyword id="KW-0813">Transport</keyword>
<feature type="chain" id="PRO_0000316503" description="Photosystem II protein D1" evidence="1">
    <location>
        <begin position="1"/>
        <end position="344"/>
    </location>
</feature>
<feature type="propeptide" id="PRO_0000316504" evidence="1">
    <location>
        <begin position="345"/>
        <end position="360"/>
    </location>
</feature>
<feature type="transmembrane region" description="Helical" evidence="1">
    <location>
        <begin position="29"/>
        <end position="46"/>
    </location>
</feature>
<feature type="transmembrane region" description="Helical" evidence="1">
    <location>
        <begin position="118"/>
        <end position="133"/>
    </location>
</feature>
<feature type="transmembrane region" description="Helical" evidence="1">
    <location>
        <begin position="142"/>
        <end position="156"/>
    </location>
</feature>
<feature type="transmembrane region" description="Helical" evidence="1">
    <location>
        <begin position="197"/>
        <end position="218"/>
    </location>
</feature>
<feature type="transmembrane region" description="Helical" evidence="1">
    <location>
        <begin position="274"/>
        <end position="288"/>
    </location>
</feature>
<feature type="binding site" description="axial binding residue" evidence="1">
    <location>
        <position position="118"/>
    </location>
    <ligand>
        <name>chlorophyll a</name>
        <dbReference type="ChEBI" id="CHEBI:58416"/>
        <label>ChlzD1</label>
    </ligand>
    <ligandPart>
        <name>Mg</name>
        <dbReference type="ChEBI" id="CHEBI:25107"/>
    </ligandPart>
</feature>
<feature type="binding site" evidence="1">
    <location>
        <position position="126"/>
    </location>
    <ligand>
        <name>pheophytin a</name>
        <dbReference type="ChEBI" id="CHEBI:136840"/>
        <label>D1</label>
    </ligand>
</feature>
<feature type="binding site" evidence="1">
    <location>
        <position position="170"/>
    </location>
    <ligand>
        <name>[CaMn4O5] cluster</name>
        <dbReference type="ChEBI" id="CHEBI:189552"/>
    </ligand>
</feature>
<feature type="binding site" evidence="1">
    <location>
        <position position="189"/>
    </location>
    <ligand>
        <name>[CaMn4O5] cluster</name>
        <dbReference type="ChEBI" id="CHEBI:189552"/>
    </ligand>
</feature>
<feature type="binding site" description="axial binding residue" evidence="1">
    <location>
        <position position="198"/>
    </location>
    <ligand>
        <name>chlorophyll a</name>
        <dbReference type="ChEBI" id="CHEBI:58416"/>
        <label>PD1</label>
    </ligand>
    <ligandPart>
        <name>Mg</name>
        <dbReference type="ChEBI" id="CHEBI:25107"/>
    </ligandPart>
</feature>
<feature type="binding site" evidence="1">
    <location>
        <position position="215"/>
    </location>
    <ligand>
        <name>a quinone</name>
        <dbReference type="ChEBI" id="CHEBI:132124"/>
        <label>B</label>
    </ligand>
</feature>
<feature type="binding site" evidence="1">
    <location>
        <position position="215"/>
    </location>
    <ligand>
        <name>Fe cation</name>
        <dbReference type="ChEBI" id="CHEBI:24875"/>
        <note>ligand shared with heterodimeric partner</note>
    </ligand>
</feature>
<feature type="binding site" evidence="1">
    <location>
        <begin position="264"/>
        <end position="265"/>
    </location>
    <ligand>
        <name>a quinone</name>
        <dbReference type="ChEBI" id="CHEBI:132124"/>
        <label>B</label>
    </ligand>
</feature>
<feature type="binding site" evidence="1">
    <location>
        <position position="272"/>
    </location>
    <ligand>
        <name>Fe cation</name>
        <dbReference type="ChEBI" id="CHEBI:24875"/>
        <note>ligand shared with heterodimeric partner</note>
    </ligand>
</feature>
<feature type="binding site" evidence="1">
    <location>
        <position position="332"/>
    </location>
    <ligand>
        <name>[CaMn4O5] cluster</name>
        <dbReference type="ChEBI" id="CHEBI:189552"/>
    </ligand>
</feature>
<feature type="binding site" evidence="1">
    <location>
        <position position="333"/>
    </location>
    <ligand>
        <name>[CaMn4O5] cluster</name>
        <dbReference type="ChEBI" id="CHEBI:189552"/>
    </ligand>
</feature>
<feature type="binding site" evidence="1">
    <location>
        <position position="342"/>
    </location>
    <ligand>
        <name>[CaMn4O5] cluster</name>
        <dbReference type="ChEBI" id="CHEBI:189552"/>
    </ligand>
</feature>
<feature type="binding site" evidence="1">
    <location>
        <position position="344"/>
    </location>
    <ligand>
        <name>[CaMn4O5] cluster</name>
        <dbReference type="ChEBI" id="CHEBI:189552"/>
    </ligand>
</feature>
<feature type="site" description="Tyrosine radical intermediate" evidence="1">
    <location>
        <position position="161"/>
    </location>
</feature>
<feature type="site" description="Stabilizes free radical intermediate" evidence="1">
    <location>
        <position position="190"/>
    </location>
</feature>
<feature type="site" description="Cleavage; by CTPA" evidence="1">
    <location>
        <begin position="344"/>
        <end position="345"/>
    </location>
</feature>
<comment type="function">
    <text evidence="1">Photosystem II (PSII) is a light-driven water:plastoquinone oxidoreductase that uses light energy to abstract electrons from H(2)O, generating O(2) and a proton gradient subsequently used for ATP formation. It consists of a core antenna complex that captures photons, and an electron transfer chain that converts photonic excitation into a charge separation. The D1/D2 (PsbA/PsbD) reaction center heterodimer binds P680, the primary electron donor of PSII as well as several subsequent electron acceptors.</text>
</comment>
<comment type="catalytic activity">
    <reaction evidence="1">
        <text>2 a plastoquinone + 4 hnu + 2 H2O = 2 a plastoquinol + O2</text>
        <dbReference type="Rhea" id="RHEA:36359"/>
        <dbReference type="Rhea" id="RHEA-COMP:9561"/>
        <dbReference type="Rhea" id="RHEA-COMP:9562"/>
        <dbReference type="ChEBI" id="CHEBI:15377"/>
        <dbReference type="ChEBI" id="CHEBI:15379"/>
        <dbReference type="ChEBI" id="CHEBI:17757"/>
        <dbReference type="ChEBI" id="CHEBI:30212"/>
        <dbReference type="ChEBI" id="CHEBI:62192"/>
        <dbReference type="EC" id="1.10.3.9"/>
    </reaction>
</comment>
<comment type="cofactor">
    <text evidence="1">The D1/D2 heterodimer binds P680, chlorophylls that are the primary electron donor of PSII, and subsequent electron acceptors. It shares a non-heme iron and each subunit binds pheophytin, quinone, additional chlorophylls, carotenoids and lipids. D1 provides most of the ligands for the Mn4-Ca-O5 cluster of the oxygen-evolving complex (OEC). There is also a Cl(-1) ion associated with D1 and D2, which is required for oxygen evolution. The PSII complex binds additional chlorophylls, carotenoids and specific lipids.</text>
</comment>
<comment type="subunit">
    <text evidence="1">PSII is composed of 1 copy each of membrane proteins PsbA, PsbB, PsbC, PsbD, PsbE, PsbF, PsbH, PsbI, PsbJ, PsbK, PsbL, PsbM, PsbT, PsbX, PsbY, PsbZ, Psb30/Ycf12, at least 3 peripheral proteins of the oxygen-evolving complex and a large number of cofactors. It forms dimeric complexes.</text>
</comment>
<comment type="subcellular location">
    <subcellularLocation>
        <location evidence="1">Plastid</location>
        <location evidence="1">Chloroplast thylakoid membrane</location>
        <topology evidence="1">Multi-pass membrane protein</topology>
    </subcellularLocation>
</comment>
<comment type="PTM">
    <text evidence="1">Tyr-161 forms a radical intermediate that is referred to as redox-active TyrZ, YZ or Y-Z.</text>
</comment>
<comment type="PTM">
    <text evidence="1">C-terminally processed by CTPA; processing is essential to allow assembly of the oxygen-evolving complex and thus photosynthetic growth.</text>
</comment>
<comment type="miscellaneous">
    <text evidence="1">2 of the reaction center chlorophylls (ChlD1 and ChlD2) are entirely coordinated by water.</text>
</comment>
<comment type="miscellaneous">
    <text evidence="1">Herbicides such as atrazine, BNT, diuron or ioxynil bind in the Q(B) binding site and block subsequent electron transfer.</text>
</comment>
<comment type="similarity">
    <text evidence="1">Belongs to the reaction center PufL/M/PsbA/D family.</text>
</comment>
<gene>
    <name evidence="1" type="primary">psbA</name>
</gene>
<evidence type="ECO:0000255" key="1">
    <source>
        <dbReference type="HAMAP-Rule" id="MF_01379"/>
    </source>
</evidence>
<name>PSBA_EMIHU</name>
<sequence>MTTTLERRESASFWEQFCAWITSTENRLYIGWFGCLMFPTLLSAISAYIIAFIAAPPVDIDGIREPVAGSLLYGNNIISGAVVPSSNAIGVHFYPIWEAASIDEWLYNGGTYQLVVLHFFIGVCAYIGREWELSYRLGMRPWICVAFSAPVAAAAAVFVIYPIGQGSFSDGMPLGISGTFNFMLVFQAEHNILMHPFHMLGVAGVFGGSLFSAMHGSLVTSSLIRETTENESANYGYKFGQEEETYNIVAAHGYFGRLIFQYASFNNSRALHFFLGAWPVVGIWFTAMGVATMAFNLNGFNFNQSVVDSQGRVINTWADILNRSNLGMEVMHERNAHNFPLDLAAGESLPVALVAPAVAA</sequence>
<reference key="1">
    <citation type="journal article" date="2005" name="DNA Res.">
        <title>The complete plastid genome sequence of the haptophyte Emiliania huxleyi: a comparison to other plastid genomes.</title>
        <authorList>
            <person name="Sanchez-Puerta M.V."/>
            <person name="Bachvaroff T.R."/>
            <person name="Delwiche C.F."/>
        </authorList>
    </citation>
    <scope>NUCLEOTIDE SEQUENCE [LARGE SCALE GENOMIC DNA]</scope>
    <source>
        <strain>CCMP373 / CSIRO-CS-57 / BT6</strain>
    </source>
</reference>
<dbReference type="EC" id="1.10.3.9" evidence="1"/>
<dbReference type="EMBL" id="AY675521">
    <property type="protein sequence ID" value="AAU81903.1"/>
    <property type="molecule type" value="Genomic_DNA"/>
</dbReference>
<dbReference type="EMBL" id="AY741371">
    <property type="protein sequence ID" value="AAX13814.1"/>
    <property type="molecule type" value="Genomic_DNA"/>
</dbReference>
<dbReference type="RefSeq" id="YP_277315.1">
    <property type="nucleotide sequence ID" value="NC_007288.1"/>
</dbReference>
<dbReference type="SMR" id="Q4G3F2"/>
<dbReference type="STRING" id="2903.Q4G3F2"/>
<dbReference type="GeneID" id="3562550"/>
<dbReference type="GO" id="GO:0009535">
    <property type="term" value="C:chloroplast thylakoid membrane"/>
    <property type="evidence" value="ECO:0007669"/>
    <property type="project" value="UniProtKB-SubCell"/>
</dbReference>
<dbReference type="GO" id="GO:0009523">
    <property type="term" value="C:photosystem II"/>
    <property type="evidence" value="ECO:0007669"/>
    <property type="project" value="UniProtKB-KW"/>
</dbReference>
<dbReference type="GO" id="GO:0016168">
    <property type="term" value="F:chlorophyll binding"/>
    <property type="evidence" value="ECO:0007669"/>
    <property type="project" value="UniProtKB-UniRule"/>
</dbReference>
<dbReference type="GO" id="GO:0045156">
    <property type="term" value="F:electron transporter, transferring electrons within the cyclic electron transport pathway of photosynthesis activity"/>
    <property type="evidence" value="ECO:0007669"/>
    <property type="project" value="InterPro"/>
</dbReference>
<dbReference type="GO" id="GO:0005506">
    <property type="term" value="F:iron ion binding"/>
    <property type="evidence" value="ECO:0007669"/>
    <property type="project" value="UniProtKB-UniRule"/>
</dbReference>
<dbReference type="GO" id="GO:0016682">
    <property type="term" value="F:oxidoreductase activity, acting on diphenols and related substances as donors, oxygen as acceptor"/>
    <property type="evidence" value="ECO:0007669"/>
    <property type="project" value="UniProtKB-UniRule"/>
</dbReference>
<dbReference type="GO" id="GO:0009772">
    <property type="term" value="P:photosynthetic electron transport in photosystem II"/>
    <property type="evidence" value="ECO:0007669"/>
    <property type="project" value="InterPro"/>
</dbReference>
<dbReference type="GO" id="GO:0009635">
    <property type="term" value="P:response to herbicide"/>
    <property type="evidence" value="ECO:0007669"/>
    <property type="project" value="UniProtKB-KW"/>
</dbReference>
<dbReference type="FunFam" id="1.20.85.10:FF:000002">
    <property type="entry name" value="Photosystem II protein D1"/>
    <property type="match status" value="1"/>
</dbReference>
<dbReference type="Gene3D" id="1.20.85.10">
    <property type="entry name" value="Photosystem II protein D1-like"/>
    <property type="match status" value="1"/>
</dbReference>
<dbReference type="HAMAP" id="MF_01379">
    <property type="entry name" value="PSII_PsbA_D1"/>
    <property type="match status" value="1"/>
</dbReference>
<dbReference type="InterPro" id="IPR055266">
    <property type="entry name" value="D1/D2"/>
</dbReference>
<dbReference type="InterPro" id="IPR036854">
    <property type="entry name" value="Photo_II_D1/D2_sf"/>
</dbReference>
<dbReference type="InterPro" id="IPR000484">
    <property type="entry name" value="Photo_RC_L/M"/>
</dbReference>
<dbReference type="InterPro" id="IPR055265">
    <property type="entry name" value="Photo_RC_L/M_CS"/>
</dbReference>
<dbReference type="InterPro" id="IPR005867">
    <property type="entry name" value="PSII_D1"/>
</dbReference>
<dbReference type="NCBIfam" id="TIGR01151">
    <property type="entry name" value="psbA"/>
    <property type="match status" value="1"/>
</dbReference>
<dbReference type="PANTHER" id="PTHR33149:SF12">
    <property type="entry name" value="PHOTOSYSTEM II D2 PROTEIN"/>
    <property type="match status" value="1"/>
</dbReference>
<dbReference type="PANTHER" id="PTHR33149">
    <property type="entry name" value="PHOTOSYSTEM II PROTEIN D1"/>
    <property type="match status" value="1"/>
</dbReference>
<dbReference type="Pfam" id="PF00124">
    <property type="entry name" value="Photo_RC"/>
    <property type="match status" value="1"/>
</dbReference>
<dbReference type="PRINTS" id="PR00256">
    <property type="entry name" value="REACTNCENTRE"/>
</dbReference>
<dbReference type="SUPFAM" id="SSF81483">
    <property type="entry name" value="Bacterial photosystem II reaction centre, L and M subunits"/>
    <property type="match status" value="1"/>
</dbReference>
<dbReference type="PROSITE" id="PS00244">
    <property type="entry name" value="REACTION_CENTER"/>
    <property type="match status" value="1"/>
</dbReference>
<accession>Q4G3F2</accession>
<proteinExistence type="inferred from homology"/>
<geneLocation type="chloroplast"/>
<protein>
    <recommendedName>
        <fullName evidence="1">Photosystem II protein D1</fullName>
        <shortName evidence="1">PSII D1 protein</shortName>
        <ecNumber evidence="1">1.10.3.9</ecNumber>
    </recommendedName>
    <alternativeName>
        <fullName evidence="1">Photosystem II Q(B) protein</fullName>
    </alternativeName>
</protein>
<organism>
    <name type="scientific">Emiliania huxleyi</name>
    <name type="common">Coccolithophore</name>
    <name type="synonym">Pontosphaera huxleyi</name>
    <dbReference type="NCBI Taxonomy" id="2903"/>
    <lineage>
        <taxon>Eukaryota</taxon>
        <taxon>Haptista</taxon>
        <taxon>Haptophyta</taxon>
        <taxon>Prymnesiophyceae</taxon>
        <taxon>Isochrysidales</taxon>
        <taxon>Noelaerhabdaceae</taxon>
        <taxon>Emiliania</taxon>
    </lineage>
</organism>